<feature type="chain" id="PRO_0000139221" description="Methionine--tRNA ligase">
    <location>
        <begin position="1"/>
        <end position="650"/>
    </location>
</feature>
<feature type="domain" description="tRNA-binding">
    <location>
        <begin position="549"/>
        <end position="650"/>
    </location>
</feature>
<feature type="region of interest" description="Disordered" evidence="2">
    <location>
        <begin position="513"/>
        <end position="535"/>
    </location>
</feature>
<feature type="short sequence motif" description="'HIGH' region">
    <location>
        <begin position="11"/>
        <end position="21"/>
    </location>
</feature>
<feature type="short sequence motif" description="'KMSKS' region">
    <location>
        <begin position="301"/>
        <end position="305"/>
    </location>
</feature>
<feature type="binding site" evidence="1">
    <location>
        <position position="126"/>
    </location>
    <ligand>
        <name>Zn(2+)</name>
        <dbReference type="ChEBI" id="CHEBI:29105"/>
    </ligand>
</feature>
<feature type="binding site" evidence="1">
    <location>
        <position position="129"/>
    </location>
    <ligand>
        <name>Zn(2+)</name>
        <dbReference type="ChEBI" id="CHEBI:29105"/>
    </ligand>
</feature>
<feature type="binding site" evidence="1">
    <location>
        <position position="147"/>
    </location>
    <ligand>
        <name>Zn(2+)</name>
        <dbReference type="ChEBI" id="CHEBI:29105"/>
    </ligand>
</feature>
<feature type="binding site" evidence="1">
    <location>
        <position position="150"/>
    </location>
    <ligand>
        <name>Zn(2+)</name>
        <dbReference type="ChEBI" id="CHEBI:29105"/>
    </ligand>
</feature>
<feature type="binding site" evidence="1">
    <location>
        <position position="304"/>
    </location>
    <ligand>
        <name>ATP</name>
        <dbReference type="ChEBI" id="CHEBI:30616"/>
    </ligand>
</feature>
<comment type="function">
    <text evidence="1">Is required not only for elongation of protein synthesis but also for the initiation of all mRNA translation through initiator tRNA(fMet) aminoacylation.</text>
</comment>
<comment type="catalytic activity">
    <reaction>
        <text>tRNA(Met) + L-methionine + ATP = L-methionyl-tRNA(Met) + AMP + diphosphate</text>
        <dbReference type="Rhea" id="RHEA:13481"/>
        <dbReference type="Rhea" id="RHEA-COMP:9667"/>
        <dbReference type="Rhea" id="RHEA-COMP:9698"/>
        <dbReference type="ChEBI" id="CHEBI:30616"/>
        <dbReference type="ChEBI" id="CHEBI:33019"/>
        <dbReference type="ChEBI" id="CHEBI:57844"/>
        <dbReference type="ChEBI" id="CHEBI:78442"/>
        <dbReference type="ChEBI" id="CHEBI:78530"/>
        <dbReference type="ChEBI" id="CHEBI:456215"/>
        <dbReference type="EC" id="6.1.1.10"/>
    </reaction>
</comment>
<comment type="cofactor">
    <cofactor evidence="1">
        <name>Zn(2+)</name>
        <dbReference type="ChEBI" id="CHEBI:29105"/>
    </cofactor>
    <text evidence="1">Binds 1 zinc ion per subunit.</text>
</comment>
<comment type="subunit">
    <text evidence="1">Homodimer.</text>
</comment>
<comment type="subcellular location">
    <subcellularLocation>
        <location evidence="1">Cytoplasm</location>
    </subcellularLocation>
</comment>
<comment type="similarity">
    <text evidence="3">Belongs to the class-I aminoacyl-tRNA synthetase family. MetG type 2A subfamily.</text>
</comment>
<accession>P56127</accession>
<name>SYM_HELPY</name>
<sequence length="650" mass="74507">MQKSLITTPIYYVNDIPHIGHAYTTLIADTLKKYYTLQGEEVFFLTGTDEHGQKIEQSARLRNQSPKAYADSISTIFKDQWDFFNLDYDGFIRTTDSEHQKCVQNAFEIMFEKGDIYKGAYSGYYCVSCESYCAISKADNTNDKVLCPDCLRETTLLEEESYFFRLSAYEKPLLDFYAKNPEAILPVYRKNEVTSFIEQGLLDLSITRTSFEWGIPLPKKMNDPKHVVYVWLDALLNYASALGYLNDLDNKMAHFECARHIVGKDILRFHAIYWPAFLMSLNLPLFKQLCVHGWWTIEGVKMSKSLGNVLDAQKIAMEYGIEELRYFLLREVPFGQDGDFSKKALIERINANLNNDLGNLLNRLLGMAKKYFNHSLKSTKITAYYSKELEKVHQILDNANSFVPKMQLHKALEELFNVYDFLNKLIAKEEPWVLHKNNESEKLEALLSLIANALLQSSFLLYAFMPKSAVKLANAFNTEITPDNYERFFKAKKLQDMILQDTEPLFSKMEKIEKTEKAGEASPEKNEKEKKDAKEKAPLKQENYIGIEDFKKVEIKVGLIKEAQRIEKSNKLLRLKVDLGEGRLRQIISGIALDYEPESLVGQMVCVVANLKPAKLMGEMSEGMILAVRDSDNLALISPTREKIAGSLIS</sequence>
<dbReference type="EC" id="6.1.1.10"/>
<dbReference type="EMBL" id="AE000511">
    <property type="protein sequence ID" value="AAD07483.1"/>
    <property type="molecule type" value="Genomic_DNA"/>
</dbReference>
<dbReference type="PIR" id="A64572">
    <property type="entry name" value="A64572"/>
</dbReference>
<dbReference type="RefSeq" id="NP_207215.1">
    <property type="nucleotide sequence ID" value="NC_000915.1"/>
</dbReference>
<dbReference type="RefSeq" id="WP_001172573.1">
    <property type="nucleotide sequence ID" value="NC_018939.1"/>
</dbReference>
<dbReference type="SMR" id="P56127"/>
<dbReference type="DIP" id="DIP-3541N"/>
<dbReference type="FunCoup" id="P56127">
    <property type="interactions" value="357"/>
</dbReference>
<dbReference type="IntAct" id="P56127">
    <property type="interactions" value="2"/>
</dbReference>
<dbReference type="MINT" id="P56127"/>
<dbReference type="STRING" id="85962.HP_0417"/>
<dbReference type="PaxDb" id="85962-C694_02125"/>
<dbReference type="EnsemblBacteria" id="AAD07483">
    <property type="protein sequence ID" value="AAD07483"/>
    <property type="gene ID" value="HP_0417"/>
</dbReference>
<dbReference type="KEGG" id="heo:C694_02125"/>
<dbReference type="KEGG" id="hpy:HP_0417"/>
<dbReference type="PATRIC" id="fig|85962.47.peg.442"/>
<dbReference type="eggNOG" id="COG0073">
    <property type="taxonomic scope" value="Bacteria"/>
</dbReference>
<dbReference type="eggNOG" id="COG0143">
    <property type="taxonomic scope" value="Bacteria"/>
</dbReference>
<dbReference type="InParanoid" id="P56127"/>
<dbReference type="OrthoDB" id="9810191at2"/>
<dbReference type="PhylomeDB" id="P56127"/>
<dbReference type="Proteomes" id="UP000000429">
    <property type="component" value="Chromosome"/>
</dbReference>
<dbReference type="GO" id="GO:0005737">
    <property type="term" value="C:cytoplasm"/>
    <property type="evidence" value="ECO:0007669"/>
    <property type="project" value="UniProtKB-SubCell"/>
</dbReference>
<dbReference type="GO" id="GO:0005524">
    <property type="term" value="F:ATP binding"/>
    <property type="evidence" value="ECO:0007669"/>
    <property type="project" value="UniProtKB-UniRule"/>
</dbReference>
<dbReference type="GO" id="GO:0046872">
    <property type="term" value="F:metal ion binding"/>
    <property type="evidence" value="ECO:0007669"/>
    <property type="project" value="UniProtKB-KW"/>
</dbReference>
<dbReference type="GO" id="GO:0004825">
    <property type="term" value="F:methionine-tRNA ligase activity"/>
    <property type="evidence" value="ECO:0000318"/>
    <property type="project" value="GO_Central"/>
</dbReference>
<dbReference type="GO" id="GO:0000049">
    <property type="term" value="F:tRNA binding"/>
    <property type="evidence" value="ECO:0007669"/>
    <property type="project" value="UniProtKB-KW"/>
</dbReference>
<dbReference type="GO" id="GO:0006431">
    <property type="term" value="P:methionyl-tRNA aminoacylation"/>
    <property type="evidence" value="ECO:0000318"/>
    <property type="project" value="GO_Central"/>
</dbReference>
<dbReference type="CDD" id="cd00814">
    <property type="entry name" value="MetRS_core"/>
    <property type="match status" value="1"/>
</dbReference>
<dbReference type="CDD" id="cd02800">
    <property type="entry name" value="tRNA_bind_EcMetRS_like"/>
    <property type="match status" value="1"/>
</dbReference>
<dbReference type="FunFam" id="1.10.730.10:FF:000093">
    <property type="entry name" value="Methionine--tRNA ligase"/>
    <property type="match status" value="1"/>
</dbReference>
<dbReference type="FunFam" id="2.170.220.10:FF:000002">
    <property type="entry name" value="Methionine--tRNA ligase"/>
    <property type="match status" value="1"/>
</dbReference>
<dbReference type="FunFam" id="2.40.50.140:FF:000042">
    <property type="entry name" value="Methionine--tRNA ligase"/>
    <property type="match status" value="1"/>
</dbReference>
<dbReference type="Gene3D" id="2.170.220.10">
    <property type="match status" value="1"/>
</dbReference>
<dbReference type="Gene3D" id="3.40.50.620">
    <property type="entry name" value="HUPs"/>
    <property type="match status" value="1"/>
</dbReference>
<dbReference type="Gene3D" id="1.10.730.10">
    <property type="entry name" value="Isoleucyl-tRNA Synthetase, Domain 1"/>
    <property type="match status" value="1"/>
</dbReference>
<dbReference type="Gene3D" id="2.40.50.140">
    <property type="entry name" value="Nucleic acid-binding proteins"/>
    <property type="match status" value="1"/>
</dbReference>
<dbReference type="HAMAP" id="MF_01228">
    <property type="entry name" value="Met_tRNA_synth_type2"/>
    <property type="match status" value="1"/>
</dbReference>
<dbReference type="InterPro" id="IPR004495">
    <property type="entry name" value="Met-tRNA-synth_bsu_C"/>
</dbReference>
<dbReference type="InterPro" id="IPR014758">
    <property type="entry name" value="Met-tRNA_synth"/>
</dbReference>
<dbReference type="InterPro" id="IPR023457">
    <property type="entry name" value="Met-tRNA_synth_2"/>
</dbReference>
<dbReference type="InterPro" id="IPR015413">
    <property type="entry name" value="Methionyl/Leucyl_tRNA_Synth"/>
</dbReference>
<dbReference type="InterPro" id="IPR033911">
    <property type="entry name" value="MetRS_core"/>
</dbReference>
<dbReference type="InterPro" id="IPR012340">
    <property type="entry name" value="NA-bd_OB-fold"/>
</dbReference>
<dbReference type="InterPro" id="IPR014729">
    <property type="entry name" value="Rossmann-like_a/b/a_fold"/>
</dbReference>
<dbReference type="InterPro" id="IPR002547">
    <property type="entry name" value="tRNA-bd_dom"/>
</dbReference>
<dbReference type="InterPro" id="IPR009080">
    <property type="entry name" value="tRNAsynth_Ia_anticodon-bd"/>
</dbReference>
<dbReference type="NCBIfam" id="TIGR00398">
    <property type="entry name" value="metG"/>
    <property type="match status" value="1"/>
</dbReference>
<dbReference type="NCBIfam" id="TIGR00399">
    <property type="entry name" value="metG_C_term"/>
    <property type="match status" value="1"/>
</dbReference>
<dbReference type="NCBIfam" id="NF008900">
    <property type="entry name" value="PRK12267.1"/>
    <property type="match status" value="1"/>
</dbReference>
<dbReference type="PANTHER" id="PTHR43326:SF1">
    <property type="entry name" value="METHIONINE--TRNA LIGASE, MITOCHONDRIAL"/>
    <property type="match status" value="1"/>
</dbReference>
<dbReference type="PANTHER" id="PTHR43326">
    <property type="entry name" value="METHIONYL-TRNA SYNTHETASE"/>
    <property type="match status" value="1"/>
</dbReference>
<dbReference type="Pfam" id="PF09334">
    <property type="entry name" value="tRNA-synt_1g"/>
    <property type="match status" value="1"/>
</dbReference>
<dbReference type="Pfam" id="PF01588">
    <property type="entry name" value="tRNA_bind"/>
    <property type="match status" value="1"/>
</dbReference>
<dbReference type="PRINTS" id="PR01041">
    <property type="entry name" value="TRNASYNTHMET"/>
</dbReference>
<dbReference type="SUPFAM" id="SSF47323">
    <property type="entry name" value="Anticodon-binding domain of a subclass of class I aminoacyl-tRNA synthetases"/>
    <property type="match status" value="1"/>
</dbReference>
<dbReference type="SUPFAM" id="SSF50249">
    <property type="entry name" value="Nucleic acid-binding proteins"/>
    <property type="match status" value="1"/>
</dbReference>
<dbReference type="SUPFAM" id="SSF52374">
    <property type="entry name" value="Nucleotidylyl transferase"/>
    <property type="match status" value="1"/>
</dbReference>
<dbReference type="PROSITE" id="PS50886">
    <property type="entry name" value="TRBD"/>
    <property type="match status" value="1"/>
</dbReference>
<proteinExistence type="inferred from homology"/>
<keyword id="KW-0030">Aminoacyl-tRNA synthetase</keyword>
<keyword id="KW-0067">ATP-binding</keyword>
<keyword id="KW-0963">Cytoplasm</keyword>
<keyword id="KW-0436">Ligase</keyword>
<keyword id="KW-0479">Metal-binding</keyword>
<keyword id="KW-0547">Nucleotide-binding</keyword>
<keyword id="KW-0648">Protein biosynthesis</keyword>
<keyword id="KW-1185">Reference proteome</keyword>
<keyword id="KW-0694">RNA-binding</keyword>
<keyword id="KW-0820">tRNA-binding</keyword>
<keyword id="KW-0862">Zinc</keyword>
<evidence type="ECO:0000250" key="1"/>
<evidence type="ECO:0000256" key="2">
    <source>
        <dbReference type="SAM" id="MobiDB-lite"/>
    </source>
</evidence>
<evidence type="ECO:0000305" key="3"/>
<organism>
    <name type="scientific">Helicobacter pylori (strain ATCC 700392 / 26695)</name>
    <name type="common">Campylobacter pylori</name>
    <dbReference type="NCBI Taxonomy" id="85962"/>
    <lineage>
        <taxon>Bacteria</taxon>
        <taxon>Pseudomonadati</taxon>
        <taxon>Campylobacterota</taxon>
        <taxon>Epsilonproteobacteria</taxon>
        <taxon>Campylobacterales</taxon>
        <taxon>Helicobacteraceae</taxon>
        <taxon>Helicobacter</taxon>
    </lineage>
</organism>
<gene>
    <name type="primary">metG</name>
    <name type="ordered locus">HP_0417</name>
</gene>
<reference key="1">
    <citation type="journal article" date="1997" name="Nature">
        <title>The complete genome sequence of the gastric pathogen Helicobacter pylori.</title>
        <authorList>
            <person name="Tomb J.-F."/>
            <person name="White O."/>
            <person name="Kerlavage A.R."/>
            <person name="Clayton R.A."/>
            <person name="Sutton G.G."/>
            <person name="Fleischmann R.D."/>
            <person name="Ketchum K.A."/>
            <person name="Klenk H.-P."/>
            <person name="Gill S.R."/>
            <person name="Dougherty B.A."/>
            <person name="Nelson K.E."/>
            <person name="Quackenbush J."/>
            <person name="Zhou L."/>
            <person name="Kirkness E.F."/>
            <person name="Peterson S.N."/>
            <person name="Loftus B.J."/>
            <person name="Richardson D.L."/>
            <person name="Dodson R.J."/>
            <person name="Khalak H.G."/>
            <person name="Glodek A."/>
            <person name="McKenney K."/>
            <person name="FitzGerald L.M."/>
            <person name="Lee N."/>
            <person name="Adams M.D."/>
            <person name="Hickey E.K."/>
            <person name="Berg D.E."/>
            <person name="Gocayne J.D."/>
            <person name="Utterback T.R."/>
            <person name="Peterson J.D."/>
            <person name="Kelley J.M."/>
            <person name="Cotton M.D."/>
            <person name="Weidman J.F."/>
            <person name="Fujii C."/>
            <person name="Bowman C."/>
            <person name="Watthey L."/>
            <person name="Wallin E."/>
            <person name="Hayes W.S."/>
            <person name="Borodovsky M."/>
            <person name="Karp P.D."/>
            <person name="Smith H.O."/>
            <person name="Fraser C.M."/>
            <person name="Venter J.C."/>
        </authorList>
    </citation>
    <scope>NUCLEOTIDE SEQUENCE [LARGE SCALE GENOMIC DNA]</scope>
    <source>
        <strain>ATCC 700392 / 26695</strain>
    </source>
</reference>
<protein>
    <recommendedName>
        <fullName>Methionine--tRNA ligase</fullName>
        <ecNumber>6.1.1.10</ecNumber>
    </recommendedName>
    <alternativeName>
        <fullName>Methionyl-tRNA synthetase</fullName>
        <shortName>MetRS</shortName>
    </alternativeName>
</protein>